<comment type="function">
    <text evidence="1">Catalyzes the conversion of N-formimidoyl-L-glutamate to L-glutamate and formamide.</text>
</comment>
<comment type="catalytic activity">
    <reaction evidence="1">
        <text>N-formimidoyl-L-glutamate + H2O = formamide + L-glutamate</text>
        <dbReference type="Rhea" id="RHEA:22492"/>
        <dbReference type="ChEBI" id="CHEBI:15377"/>
        <dbReference type="ChEBI" id="CHEBI:16397"/>
        <dbReference type="ChEBI" id="CHEBI:29985"/>
        <dbReference type="ChEBI" id="CHEBI:58928"/>
        <dbReference type="EC" id="3.5.3.8"/>
    </reaction>
</comment>
<comment type="cofactor">
    <cofactor evidence="1">
        <name>Mn(2+)</name>
        <dbReference type="ChEBI" id="CHEBI:29035"/>
    </cofactor>
    <text evidence="1">Binds 2 manganese ions per subunit.</text>
</comment>
<comment type="pathway">
    <text evidence="1">Amino-acid degradation; L-histidine degradation into L-glutamate; L-glutamate from N-formimidoyl-L-glutamate (hydrolase route): step 1/1.</text>
</comment>
<comment type="similarity">
    <text evidence="1">Belongs to the arginase family.</text>
</comment>
<comment type="sequence caution" evidence="2">
    <conflict type="erroneous initiation">
        <sequence resource="EMBL-CDS" id="AAU26798"/>
    </conflict>
</comment>
<feature type="chain" id="PRO_0000173758" description="Formimidoylglutamase">
    <location>
        <begin position="1"/>
        <end position="319"/>
    </location>
</feature>
<feature type="binding site" evidence="1">
    <location>
        <position position="131"/>
    </location>
    <ligand>
        <name>Mn(2+)</name>
        <dbReference type="ChEBI" id="CHEBI:29035"/>
        <label>1</label>
    </ligand>
</feature>
<feature type="binding site" evidence="1">
    <location>
        <position position="154"/>
    </location>
    <ligand>
        <name>Mn(2+)</name>
        <dbReference type="ChEBI" id="CHEBI:29035"/>
        <label>1</label>
    </ligand>
</feature>
<feature type="binding site" evidence="1">
    <location>
        <position position="154"/>
    </location>
    <ligand>
        <name>Mn(2+)</name>
        <dbReference type="ChEBI" id="CHEBI:29035"/>
        <label>2</label>
    </ligand>
</feature>
<feature type="binding site" evidence="1">
    <location>
        <position position="156"/>
    </location>
    <ligand>
        <name>Mn(2+)</name>
        <dbReference type="ChEBI" id="CHEBI:29035"/>
        <label>2</label>
    </ligand>
</feature>
<feature type="binding site" evidence="1">
    <location>
        <position position="158"/>
    </location>
    <ligand>
        <name>Mn(2+)</name>
        <dbReference type="ChEBI" id="CHEBI:29035"/>
        <label>1</label>
    </ligand>
</feature>
<feature type="binding site" evidence="1">
    <location>
        <position position="248"/>
    </location>
    <ligand>
        <name>Mn(2+)</name>
        <dbReference type="ChEBI" id="CHEBI:29035"/>
        <label>1</label>
    </ligand>
</feature>
<feature type="binding site" evidence="1">
    <location>
        <position position="248"/>
    </location>
    <ligand>
        <name>Mn(2+)</name>
        <dbReference type="ChEBI" id="CHEBI:29035"/>
        <label>2</label>
    </ligand>
</feature>
<feature type="binding site" evidence="1">
    <location>
        <position position="250"/>
    </location>
    <ligand>
        <name>Mn(2+)</name>
        <dbReference type="ChEBI" id="CHEBI:29035"/>
        <label>2</label>
    </ligand>
</feature>
<keyword id="KW-0369">Histidine metabolism</keyword>
<keyword id="KW-0378">Hydrolase</keyword>
<keyword id="KW-0464">Manganese</keyword>
<keyword id="KW-0479">Metal-binding</keyword>
<keyword id="KW-1185">Reference proteome</keyword>
<protein>
    <recommendedName>
        <fullName evidence="1">Formimidoylglutamase</fullName>
        <ecNumber evidence="1">3.5.3.8</ecNumber>
    </recommendedName>
    <alternativeName>
        <fullName evidence="1">Formiminoglutamase</fullName>
    </alternativeName>
    <alternativeName>
        <fullName evidence="1">Formiminoglutamate hydrolase</fullName>
    </alternativeName>
</protein>
<name>HUTG_LEGPH</name>
<accession>Q5ZXM2</accession>
<reference key="1">
    <citation type="journal article" date="2004" name="Science">
        <title>The genomic sequence of the accidental pathogen Legionella pneumophila.</title>
        <authorList>
            <person name="Chien M."/>
            <person name="Morozova I."/>
            <person name="Shi S."/>
            <person name="Sheng H."/>
            <person name="Chen J."/>
            <person name="Gomez S.M."/>
            <person name="Asamani G."/>
            <person name="Hill K."/>
            <person name="Nuara J."/>
            <person name="Feder M."/>
            <person name="Rineer J."/>
            <person name="Greenberg J.J."/>
            <person name="Steshenko V."/>
            <person name="Park S.H."/>
            <person name="Zhao B."/>
            <person name="Teplitskaya E."/>
            <person name="Edwards J.R."/>
            <person name="Pampou S."/>
            <person name="Georghiou A."/>
            <person name="Chou I.-C."/>
            <person name="Iannuccilli W."/>
            <person name="Ulz M.E."/>
            <person name="Kim D.H."/>
            <person name="Geringer-Sameth A."/>
            <person name="Goldsberry C."/>
            <person name="Morozov P."/>
            <person name="Fischer S.G."/>
            <person name="Segal G."/>
            <person name="Qu X."/>
            <person name="Rzhetsky A."/>
            <person name="Zhang P."/>
            <person name="Cayanis E."/>
            <person name="De Jong P.J."/>
            <person name="Ju J."/>
            <person name="Kalachikov S."/>
            <person name="Shuman H.A."/>
            <person name="Russo J.J."/>
        </authorList>
    </citation>
    <scope>NUCLEOTIDE SEQUENCE [LARGE SCALE GENOMIC DNA]</scope>
    <source>
        <strain>Philadelphia 1 / ATCC 33152 / DSM 7513</strain>
    </source>
</reference>
<proteinExistence type="inferred from homology"/>
<gene>
    <name evidence="1" type="primary">hutG</name>
    <name type="ordered locus">lpg0709</name>
</gene>
<evidence type="ECO:0000255" key="1">
    <source>
        <dbReference type="HAMAP-Rule" id="MF_00737"/>
    </source>
</evidence>
<evidence type="ECO:0000305" key="2"/>
<organism>
    <name type="scientific">Legionella pneumophila subsp. pneumophila (strain Philadelphia 1 / ATCC 33152 / DSM 7513)</name>
    <dbReference type="NCBI Taxonomy" id="272624"/>
    <lineage>
        <taxon>Bacteria</taxon>
        <taxon>Pseudomonadati</taxon>
        <taxon>Pseudomonadota</taxon>
        <taxon>Gammaproteobacteria</taxon>
        <taxon>Legionellales</taxon>
        <taxon>Legionellaceae</taxon>
        <taxon>Legionella</taxon>
    </lineage>
</organism>
<dbReference type="EC" id="3.5.3.8" evidence="1"/>
<dbReference type="EMBL" id="AE017354">
    <property type="protein sequence ID" value="AAU26798.1"/>
    <property type="status" value="ALT_INIT"/>
    <property type="molecule type" value="Genomic_DNA"/>
</dbReference>
<dbReference type="RefSeq" id="WP_025862448.1">
    <property type="nucleotide sequence ID" value="NC_002942.5"/>
</dbReference>
<dbReference type="RefSeq" id="YP_094745.1">
    <property type="nucleotide sequence ID" value="NC_002942.5"/>
</dbReference>
<dbReference type="SMR" id="Q5ZXM2"/>
<dbReference type="STRING" id="272624.lpg0709"/>
<dbReference type="PaxDb" id="272624-lpg0709"/>
<dbReference type="GeneID" id="57034702"/>
<dbReference type="KEGG" id="lpn:lpg0709"/>
<dbReference type="PATRIC" id="fig|272624.6.peg.731"/>
<dbReference type="eggNOG" id="COG0010">
    <property type="taxonomic scope" value="Bacteria"/>
</dbReference>
<dbReference type="HOGENOM" id="CLU_039478_2_0_6"/>
<dbReference type="OrthoDB" id="9789727at2"/>
<dbReference type="UniPathway" id="UPA00379">
    <property type="reaction ID" value="UER00552"/>
</dbReference>
<dbReference type="Proteomes" id="UP000000609">
    <property type="component" value="Chromosome"/>
</dbReference>
<dbReference type="GO" id="GO:0008783">
    <property type="term" value="F:agmatinase activity"/>
    <property type="evidence" value="ECO:0007669"/>
    <property type="project" value="TreeGrafter"/>
</dbReference>
<dbReference type="GO" id="GO:0050415">
    <property type="term" value="F:formimidoylglutamase activity"/>
    <property type="evidence" value="ECO:0007669"/>
    <property type="project" value="UniProtKB-UniRule"/>
</dbReference>
<dbReference type="GO" id="GO:0030145">
    <property type="term" value="F:manganese ion binding"/>
    <property type="evidence" value="ECO:0007669"/>
    <property type="project" value="UniProtKB-UniRule"/>
</dbReference>
<dbReference type="GO" id="GO:0019556">
    <property type="term" value="P:L-histidine catabolic process to glutamate and formamide"/>
    <property type="evidence" value="ECO:0007669"/>
    <property type="project" value="UniProtKB-UniPathway"/>
</dbReference>
<dbReference type="GO" id="GO:0019557">
    <property type="term" value="P:L-histidine catabolic process to glutamate and formate"/>
    <property type="evidence" value="ECO:0007669"/>
    <property type="project" value="UniProtKB-UniPathway"/>
</dbReference>
<dbReference type="GO" id="GO:0033389">
    <property type="term" value="P:putrescine biosynthetic process from arginine, via agmatine"/>
    <property type="evidence" value="ECO:0007669"/>
    <property type="project" value="TreeGrafter"/>
</dbReference>
<dbReference type="CDD" id="cd09988">
    <property type="entry name" value="Formimidoylglutamase"/>
    <property type="match status" value="1"/>
</dbReference>
<dbReference type="Gene3D" id="3.40.800.10">
    <property type="entry name" value="Ureohydrolase domain"/>
    <property type="match status" value="1"/>
</dbReference>
<dbReference type="HAMAP" id="MF_00737">
    <property type="entry name" value="Formimidoylglutam"/>
    <property type="match status" value="1"/>
</dbReference>
<dbReference type="InterPro" id="IPR005923">
    <property type="entry name" value="HutG"/>
</dbReference>
<dbReference type="InterPro" id="IPR006035">
    <property type="entry name" value="Ureohydrolase"/>
</dbReference>
<dbReference type="InterPro" id="IPR023696">
    <property type="entry name" value="Ureohydrolase_dom_sf"/>
</dbReference>
<dbReference type="NCBIfam" id="TIGR01227">
    <property type="entry name" value="hutG"/>
    <property type="match status" value="1"/>
</dbReference>
<dbReference type="PANTHER" id="PTHR11358">
    <property type="entry name" value="ARGINASE/AGMATINASE"/>
    <property type="match status" value="1"/>
</dbReference>
<dbReference type="PANTHER" id="PTHR11358:SF35">
    <property type="entry name" value="FORMIMIDOYLGLUTAMASE"/>
    <property type="match status" value="1"/>
</dbReference>
<dbReference type="Pfam" id="PF00491">
    <property type="entry name" value="Arginase"/>
    <property type="match status" value="1"/>
</dbReference>
<dbReference type="PIRSF" id="PIRSF036979">
    <property type="entry name" value="Arginase"/>
    <property type="match status" value="1"/>
</dbReference>
<dbReference type="SUPFAM" id="SSF52768">
    <property type="entry name" value="Arginase/deacetylase"/>
    <property type="match status" value="1"/>
</dbReference>
<dbReference type="PROSITE" id="PS51409">
    <property type="entry name" value="ARGINASE_2"/>
    <property type="match status" value="1"/>
</dbReference>
<sequence>MFDDLSNYRPANPALWQGRKDTANQERFFQKITFIDNQNELMTKDKKTIFLGFASDTGIKRNLGRTGAKLGPDQIKTQLAKLPCHNNKHYVDLGNVVCENDELELSQSQFAQIVHFCHENGHQICAFGGGHEIAWAHYQGLSSLYPKLGVINFDAHFDLRPYKKGEFGNSGTPFSQIATYCEEKKMPFHYCCIGVQKFGNTPSLFEKAKKLNVSYLSAEDLYEQSQAWQIAFLDDFILNLDHIYLTICLDVLAECYAPGVSAPQALGLSPWQIMPLLKYLIQSGKVVSLDIAELSPPLDSELKTARLAALIIAELLDTN</sequence>